<gene>
    <name type="primary">gpm1</name>
    <name type="ORF">SPAC26F1.06</name>
</gene>
<name>PMGY_SCHPO</name>
<sequence length="211" mass="23765">MTTEAAPNLLVLTRHGESEWNKLNLFTGWKDPALSETGIKEAKLGGERLKSRGYKFDIAFTSALQRAQKTCQIILEEVGEPNLETIKSEKLNERYYGDLQGLNKDDARKKWGAEQVQIWRRSYDIAPPNGESLKDTAERVLPYYKSTIVPHILKGEKVLIAAHGNSLRALIMDLEGLTGDQIVKRELATGVPIVYHLDKDGKYVSKELIDN</sequence>
<proteinExistence type="evidence at protein level"/>
<comment type="catalytic activity">
    <reaction>
        <text>(2R)-2-phosphoglycerate = (2R)-3-phosphoglycerate</text>
        <dbReference type="Rhea" id="RHEA:15901"/>
        <dbReference type="ChEBI" id="CHEBI:58272"/>
        <dbReference type="ChEBI" id="CHEBI:58289"/>
        <dbReference type="EC" id="5.4.2.11"/>
    </reaction>
</comment>
<comment type="pathway">
    <text>Carbohydrate degradation; glycolysis; pyruvate from D-glyceraldehyde 3-phosphate: step 3/5.</text>
</comment>
<comment type="subunit">
    <text evidence="3">Monomer.</text>
</comment>
<comment type="PTM">
    <text>The N-terminus is blocked.</text>
</comment>
<comment type="similarity">
    <text evidence="4">Belongs to the phosphoglycerate mutase family. BPG-dependent PGAM subfamily.</text>
</comment>
<reference key="1">
    <citation type="journal article" date="1994" name="Biochem. J.">
        <title>The amino acid sequence of the small monomeric phosphoglycerate mutase from the fission yeast Schizosaccharomyces pombe.</title>
        <authorList>
            <person name="Nairn J."/>
            <person name="Price N.C."/>
            <person name="Fothergill-Gilmore L.A."/>
            <person name="Walker G.E."/>
            <person name="Fothergill J.E."/>
            <person name="Dunbar B."/>
        </authorList>
    </citation>
    <scope>NUCLEOTIDE SEQUENCE [MRNA]</scope>
    <scope>PARTIAL PROTEIN SEQUENCE</scope>
    <scope>SUBUNIT</scope>
    <source>
        <strain>CMI 39917</strain>
    </source>
</reference>
<reference key="2">
    <citation type="journal article" date="2002" name="Nature">
        <title>The genome sequence of Schizosaccharomyces pombe.</title>
        <authorList>
            <person name="Wood V."/>
            <person name="Gwilliam R."/>
            <person name="Rajandream M.A."/>
            <person name="Lyne M.H."/>
            <person name="Lyne R."/>
            <person name="Stewart A."/>
            <person name="Sgouros J.G."/>
            <person name="Peat N."/>
            <person name="Hayles J."/>
            <person name="Baker S.G."/>
            <person name="Basham D."/>
            <person name="Bowman S."/>
            <person name="Brooks K."/>
            <person name="Brown D."/>
            <person name="Brown S."/>
            <person name="Chillingworth T."/>
            <person name="Churcher C.M."/>
            <person name="Collins M."/>
            <person name="Connor R."/>
            <person name="Cronin A."/>
            <person name="Davis P."/>
            <person name="Feltwell T."/>
            <person name="Fraser A."/>
            <person name="Gentles S."/>
            <person name="Goble A."/>
            <person name="Hamlin N."/>
            <person name="Harris D.E."/>
            <person name="Hidalgo J."/>
            <person name="Hodgson G."/>
            <person name="Holroyd S."/>
            <person name="Hornsby T."/>
            <person name="Howarth S."/>
            <person name="Huckle E.J."/>
            <person name="Hunt S."/>
            <person name="Jagels K."/>
            <person name="James K.D."/>
            <person name="Jones L."/>
            <person name="Jones M."/>
            <person name="Leather S."/>
            <person name="McDonald S."/>
            <person name="McLean J."/>
            <person name="Mooney P."/>
            <person name="Moule S."/>
            <person name="Mungall K.L."/>
            <person name="Murphy L.D."/>
            <person name="Niblett D."/>
            <person name="Odell C."/>
            <person name="Oliver K."/>
            <person name="O'Neil S."/>
            <person name="Pearson D."/>
            <person name="Quail M.A."/>
            <person name="Rabbinowitsch E."/>
            <person name="Rutherford K.M."/>
            <person name="Rutter S."/>
            <person name="Saunders D."/>
            <person name="Seeger K."/>
            <person name="Sharp S."/>
            <person name="Skelton J."/>
            <person name="Simmonds M.N."/>
            <person name="Squares R."/>
            <person name="Squares S."/>
            <person name="Stevens K."/>
            <person name="Taylor K."/>
            <person name="Taylor R.G."/>
            <person name="Tivey A."/>
            <person name="Walsh S.V."/>
            <person name="Warren T."/>
            <person name="Whitehead S."/>
            <person name="Woodward J.R."/>
            <person name="Volckaert G."/>
            <person name="Aert R."/>
            <person name="Robben J."/>
            <person name="Grymonprez B."/>
            <person name="Weltjens I."/>
            <person name="Vanstreels E."/>
            <person name="Rieger M."/>
            <person name="Schaefer M."/>
            <person name="Mueller-Auer S."/>
            <person name="Gabel C."/>
            <person name="Fuchs M."/>
            <person name="Duesterhoeft A."/>
            <person name="Fritzc C."/>
            <person name="Holzer E."/>
            <person name="Moestl D."/>
            <person name="Hilbert H."/>
            <person name="Borzym K."/>
            <person name="Langer I."/>
            <person name="Beck A."/>
            <person name="Lehrach H."/>
            <person name="Reinhardt R."/>
            <person name="Pohl T.M."/>
            <person name="Eger P."/>
            <person name="Zimmermann W."/>
            <person name="Wedler H."/>
            <person name="Wambutt R."/>
            <person name="Purnelle B."/>
            <person name="Goffeau A."/>
            <person name="Cadieu E."/>
            <person name="Dreano S."/>
            <person name="Gloux S."/>
            <person name="Lelaure V."/>
            <person name="Mottier S."/>
            <person name="Galibert F."/>
            <person name="Aves S.J."/>
            <person name="Xiang Z."/>
            <person name="Hunt C."/>
            <person name="Moore K."/>
            <person name="Hurst S.M."/>
            <person name="Lucas M."/>
            <person name="Rochet M."/>
            <person name="Gaillardin C."/>
            <person name="Tallada V.A."/>
            <person name="Garzon A."/>
            <person name="Thode G."/>
            <person name="Daga R.R."/>
            <person name="Cruzado L."/>
            <person name="Jimenez J."/>
            <person name="Sanchez M."/>
            <person name="del Rey F."/>
            <person name="Benito J."/>
            <person name="Dominguez A."/>
            <person name="Revuelta J.L."/>
            <person name="Moreno S."/>
            <person name="Armstrong J."/>
            <person name="Forsburg S.L."/>
            <person name="Cerutti L."/>
            <person name="Lowe T."/>
            <person name="McCombie W.R."/>
            <person name="Paulsen I."/>
            <person name="Potashkin J."/>
            <person name="Shpakovski G.V."/>
            <person name="Ussery D."/>
            <person name="Barrell B.G."/>
            <person name="Nurse P."/>
        </authorList>
    </citation>
    <scope>NUCLEOTIDE SEQUENCE [LARGE SCALE GENOMIC DNA]</scope>
    <source>
        <strain>972 / ATCC 24843</strain>
    </source>
</reference>
<reference key="3">
    <citation type="journal article" date="2008" name="J. Proteome Res.">
        <title>Phosphoproteome analysis of fission yeast.</title>
        <authorList>
            <person name="Wilson-Grady J.T."/>
            <person name="Villen J."/>
            <person name="Gygi S.P."/>
        </authorList>
    </citation>
    <scope>PHOSPHORYLATION [LARGE SCALE ANALYSIS] AT THR-37; SER-62; TYR-96 AND SER-166</scope>
    <scope>IDENTIFICATION BY MASS SPECTROMETRY</scope>
</reference>
<reference key="4">
    <citation type="journal article" date="2001" name="J. Mol. Biol.">
        <title>Solution structure and dynamics of an open beta-sheet, glycolytic enzyme, monomeric 23.7 kDa phosphoglycerate mutase from Schizosaccharomyces pombe.</title>
        <authorList>
            <person name="Uhrinova S."/>
            <person name="Uhrin D."/>
            <person name="Nairn J."/>
            <person name="Price N.C."/>
            <person name="Fothergill-Gilmore L.A."/>
            <person name="Barlow P.N."/>
        </authorList>
    </citation>
    <scope>STRUCTURE BY NMR</scope>
</reference>
<dbReference type="EC" id="5.4.2.11"/>
<dbReference type="EMBL" id="X75385">
    <property type="protein sequence ID" value="CAA53154.1"/>
    <property type="molecule type" value="mRNA"/>
</dbReference>
<dbReference type="EMBL" id="CU329670">
    <property type="protein sequence ID" value="CAA97363.1"/>
    <property type="molecule type" value="Genomic_DNA"/>
</dbReference>
<dbReference type="PIR" id="S43369">
    <property type="entry name" value="S43214"/>
</dbReference>
<dbReference type="RefSeq" id="NP_594889.1">
    <property type="nucleotide sequence ID" value="NM_001020318.2"/>
</dbReference>
<dbReference type="PDB" id="1FZT">
    <property type="method" value="NMR"/>
    <property type="chains" value="A=1-211"/>
</dbReference>
<dbReference type="PDBsum" id="1FZT"/>
<dbReference type="BMRB" id="P36623"/>
<dbReference type="SMR" id="P36623"/>
<dbReference type="BioGRID" id="278562">
    <property type="interactions" value="6"/>
</dbReference>
<dbReference type="FunCoup" id="P36623">
    <property type="interactions" value="349"/>
</dbReference>
<dbReference type="IntAct" id="P36623">
    <property type="interactions" value="1"/>
</dbReference>
<dbReference type="MINT" id="P36623"/>
<dbReference type="STRING" id="284812.P36623"/>
<dbReference type="iPTMnet" id="P36623"/>
<dbReference type="PaxDb" id="4896-SPAC26F1.06.1"/>
<dbReference type="EnsemblFungi" id="SPAC26F1.06.1">
    <property type="protein sequence ID" value="SPAC26F1.06.1:pep"/>
    <property type="gene ID" value="SPAC26F1.06"/>
</dbReference>
<dbReference type="GeneID" id="2542085"/>
<dbReference type="KEGG" id="spo:2542085"/>
<dbReference type="PomBase" id="SPAC26F1.06">
    <property type="gene designation" value="gpm1"/>
</dbReference>
<dbReference type="VEuPathDB" id="FungiDB:SPAC26F1.06"/>
<dbReference type="eggNOG" id="KOG0235">
    <property type="taxonomic scope" value="Eukaryota"/>
</dbReference>
<dbReference type="HOGENOM" id="CLU_033323_1_4_1"/>
<dbReference type="InParanoid" id="P36623"/>
<dbReference type="OMA" id="MLPYWYD"/>
<dbReference type="PhylomeDB" id="P36623"/>
<dbReference type="BRENDA" id="5.4.2.11">
    <property type="organism ID" value="5613"/>
</dbReference>
<dbReference type="Reactome" id="R-SPO-6798695">
    <property type="pathway name" value="Neutrophil degranulation"/>
</dbReference>
<dbReference type="Reactome" id="R-SPO-70171">
    <property type="pathway name" value="Glycolysis"/>
</dbReference>
<dbReference type="Reactome" id="R-SPO-70263">
    <property type="pathway name" value="Gluconeogenesis"/>
</dbReference>
<dbReference type="SABIO-RK" id="P36623"/>
<dbReference type="UniPathway" id="UPA00109">
    <property type="reaction ID" value="UER00186"/>
</dbReference>
<dbReference type="EvolutionaryTrace" id="P36623"/>
<dbReference type="PRO" id="PR:P36623"/>
<dbReference type="Proteomes" id="UP000002485">
    <property type="component" value="Chromosome I"/>
</dbReference>
<dbReference type="GO" id="GO:0005829">
    <property type="term" value="C:cytosol"/>
    <property type="evidence" value="ECO:0007005"/>
    <property type="project" value="PomBase"/>
</dbReference>
<dbReference type="GO" id="GO:0005634">
    <property type="term" value="C:nucleus"/>
    <property type="evidence" value="ECO:0007005"/>
    <property type="project" value="PomBase"/>
</dbReference>
<dbReference type="GO" id="GO:0004619">
    <property type="term" value="F:phosphoglycerate mutase activity"/>
    <property type="evidence" value="ECO:0000314"/>
    <property type="project" value="PomBase"/>
</dbReference>
<dbReference type="GO" id="GO:0061621">
    <property type="term" value="P:canonical glycolysis"/>
    <property type="evidence" value="ECO:0000266"/>
    <property type="project" value="PomBase"/>
</dbReference>
<dbReference type="GO" id="GO:0006094">
    <property type="term" value="P:gluconeogenesis"/>
    <property type="evidence" value="ECO:0000266"/>
    <property type="project" value="PomBase"/>
</dbReference>
<dbReference type="CDD" id="cd07067">
    <property type="entry name" value="HP_PGM_like"/>
    <property type="match status" value="1"/>
</dbReference>
<dbReference type="FunFam" id="3.40.50.1240:FF:000003">
    <property type="entry name" value="2,3-bisphosphoglycerate-dependent phosphoglycerate mutase"/>
    <property type="match status" value="1"/>
</dbReference>
<dbReference type="Gene3D" id="3.40.50.1240">
    <property type="entry name" value="Phosphoglycerate mutase-like"/>
    <property type="match status" value="1"/>
</dbReference>
<dbReference type="HAMAP" id="MF_01039">
    <property type="entry name" value="PGAM_GpmA"/>
    <property type="match status" value="1"/>
</dbReference>
<dbReference type="InterPro" id="IPR013078">
    <property type="entry name" value="His_Pase_superF_clade-1"/>
</dbReference>
<dbReference type="InterPro" id="IPR029033">
    <property type="entry name" value="His_PPase_superfam"/>
</dbReference>
<dbReference type="InterPro" id="IPR001345">
    <property type="entry name" value="PG/BPGM_mutase_AS"/>
</dbReference>
<dbReference type="InterPro" id="IPR005952">
    <property type="entry name" value="Phosphogly_mut1"/>
</dbReference>
<dbReference type="NCBIfam" id="TIGR01258">
    <property type="entry name" value="pgm_1"/>
    <property type="match status" value="2"/>
</dbReference>
<dbReference type="NCBIfam" id="NF002339">
    <property type="entry name" value="PRK01295.1"/>
    <property type="match status" value="1"/>
</dbReference>
<dbReference type="PANTHER" id="PTHR11931">
    <property type="entry name" value="PHOSPHOGLYCERATE MUTASE"/>
    <property type="match status" value="1"/>
</dbReference>
<dbReference type="Pfam" id="PF00300">
    <property type="entry name" value="His_Phos_1"/>
    <property type="match status" value="1"/>
</dbReference>
<dbReference type="SMART" id="SM00855">
    <property type="entry name" value="PGAM"/>
    <property type="match status" value="1"/>
</dbReference>
<dbReference type="SUPFAM" id="SSF53254">
    <property type="entry name" value="Phosphoglycerate mutase-like"/>
    <property type="match status" value="1"/>
</dbReference>
<dbReference type="PROSITE" id="PS00175">
    <property type="entry name" value="PG_MUTASE"/>
    <property type="match status" value="1"/>
</dbReference>
<organism>
    <name type="scientific">Schizosaccharomyces pombe (strain 972 / ATCC 24843)</name>
    <name type="common">Fission yeast</name>
    <dbReference type="NCBI Taxonomy" id="284812"/>
    <lineage>
        <taxon>Eukaryota</taxon>
        <taxon>Fungi</taxon>
        <taxon>Dikarya</taxon>
        <taxon>Ascomycota</taxon>
        <taxon>Taphrinomycotina</taxon>
        <taxon>Schizosaccharomycetes</taxon>
        <taxon>Schizosaccharomycetales</taxon>
        <taxon>Schizosaccharomycetaceae</taxon>
        <taxon>Schizosaccharomyces</taxon>
    </lineage>
</organism>
<protein>
    <recommendedName>
        <fullName>Phosphoglycerate mutase</fullName>
        <shortName>PGAM</shortName>
        <ecNumber>5.4.2.11</ecNumber>
    </recommendedName>
    <alternativeName>
        <fullName>BPG-dependent PGAM</fullName>
    </alternativeName>
    <alternativeName>
        <fullName>MPGM</fullName>
    </alternativeName>
    <alternativeName>
        <fullName>Phosphoglyceromutase</fullName>
    </alternativeName>
</protein>
<feature type="chain" id="PRO_0000179838" description="Phosphoglycerate mutase">
    <location>
        <begin position="1"/>
        <end position="211"/>
    </location>
</feature>
<feature type="active site" description="Tele-phosphohistidine intermediate" evidence="1">
    <location>
        <position position="15"/>
    </location>
</feature>
<feature type="active site" description="Proton donor/acceptor" evidence="1">
    <location>
        <position position="93"/>
    </location>
</feature>
<feature type="binding site" evidence="1">
    <location>
        <begin position="14"/>
        <end position="21"/>
    </location>
    <ligand>
        <name>substrate</name>
    </ligand>
</feature>
<feature type="binding site" evidence="1">
    <location>
        <begin position="27"/>
        <end position="28"/>
    </location>
    <ligand>
        <name>substrate</name>
    </ligand>
</feature>
<feature type="binding site" evidence="1">
    <location>
        <position position="66"/>
    </location>
    <ligand>
        <name>substrate</name>
    </ligand>
</feature>
<feature type="binding site" evidence="1">
    <location>
        <begin position="93"/>
        <end position="96"/>
    </location>
    <ligand>
        <name>substrate</name>
    </ligand>
</feature>
<feature type="binding site" evidence="1">
    <location>
        <position position="104"/>
    </location>
    <ligand>
        <name>substrate</name>
    </ligand>
</feature>
<feature type="binding site" evidence="1">
    <location>
        <begin position="120"/>
        <end position="121"/>
    </location>
    <ligand>
        <name>substrate</name>
    </ligand>
</feature>
<feature type="binding site" evidence="1">
    <location>
        <begin position="164"/>
        <end position="165"/>
    </location>
    <ligand>
        <name>substrate</name>
    </ligand>
</feature>
<feature type="site" description="Transition state stabilizer" evidence="1">
    <location>
        <position position="163"/>
    </location>
</feature>
<feature type="modified residue" description="Phosphothreonine" evidence="2">
    <location>
        <position position="37"/>
    </location>
</feature>
<feature type="modified residue" description="Phosphoserine" evidence="2">
    <location>
        <position position="62"/>
    </location>
</feature>
<feature type="modified residue" description="Phosphotyrosine" evidence="2">
    <location>
        <position position="96"/>
    </location>
</feature>
<feature type="modified residue" description="Phosphoserine" evidence="2">
    <location>
        <position position="166"/>
    </location>
</feature>
<feature type="strand" evidence="5">
    <location>
        <begin position="9"/>
        <end position="12"/>
    </location>
</feature>
<feature type="helix" evidence="5">
    <location>
        <begin position="19"/>
        <end position="23"/>
    </location>
</feature>
<feature type="strand" evidence="5">
    <location>
        <begin position="28"/>
        <end position="30"/>
    </location>
</feature>
<feature type="helix" evidence="5">
    <location>
        <begin position="36"/>
        <end position="52"/>
    </location>
</feature>
<feature type="strand" evidence="5">
    <location>
        <begin position="57"/>
        <end position="64"/>
    </location>
</feature>
<feature type="helix" evidence="5">
    <location>
        <begin position="65"/>
        <end position="78"/>
    </location>
</feature>
<feature type="strand" evidence="5">
    <location>
        <begin position="83"/>
        <end position="89"/>
    </location>
</feature>
<feature type="helix" evidence="5">
    <location>
        <begin position="97"/>
        <end position="99"/>
    </location>
</feature>
<feature type="helix" evidence="5">
    <location>
        <begin position="104"/>
        <end position="120"/>
    </location>
</feature>
<feature type="strand" evidence="5">
    <location>
        <begin position="121"/>
        <end position="124"/>
    </location>
</feature>
<feature type="helix" evidence="5">
    <location>
        <begin position="133"/>
        <end position="148"/>
    </location>
</feature>
<feature type="helix" evidence="5">
    <location>
        <begin position="151"/>
        <end position="154"/>
    </location>
</feature>
<feature type="strand" evidence="5">
    <location>
        <begin position="158"/>
        <end position="162"/>
    </location>
</feature>
<feature type="helix" evidence="5">
    <location>
        <begin position="164"/>
        <end position="175"/>
    </location>
</feature>
<feature type="turn" evidence="5">
    <location>
        <begin position="179"/>
        <end position="181"/>
    </location>
</feature>
<feature type="strand" evidence="5">
    <location>
        <begin position="182"/>
        <end position="184"/>
    </location>
</feature>
<feature type="strand" evidence="5">
    <location>
        <begin position="189"/>
        <end position="191"/>
    </location>
</feature>
<feature type="strand" evidence="5">
    <location>
        <begin position="193"/>
        <end position="197"/>
    </location>
</feature>
<feature type="strand" evidence="5">
    <location>
        <begin position="199"/>
        <end position="201"/>
    </location>
</feature>
<feature type="strand" evidence="5">
    <location>
        <begin position="203"/>
        <end position="205"/>
    </location>
</feature>
<keyword id="KW-0002">3D-structure</keyword>
<keyword id="KW-0903">Direct protein sequencing</keyword>
<keyword id="KW-0324">Glycolysis</keyword>
<keyword id="KW-0413">Isomerase</keyword>
<keyword id="KW-0597">Phosphoprotein</keyword>
<keyword id="KW-1185">Reference proteome</keyword>
<accession>P36623</accession>
<evidence type="ECO:0000250" key="1">
    <source>
        <dbReference type="UniProtKB" id="P00950"/>
    </source>
</evidence>
<evidence type="ECO:0000269" key="2">
    <source>
    </source>
</evidence>
<evidence type="ECO:0000269" key="3">
    <source>
    </source>
</evidence>
<evidence type="ECO:0000305" key="4"/>
<evidence type="ECO:0007829" key="5">
    <source>
        <dbReference type="PDB" id="1FZT"/>
    </source>
</evidence>